<feature type="chain" id="PRO_0000184961" description="Centromere/kinetochore protein zw10">
    <location>
        <begin position="1"/>
        <end position="714"/>
    </location>
</feature>
<evidence type="ECO:0000250" key="1"/>
<evidence type="ECO:0000305" key="2"/>
<reference key="1">
    <citation type="journal article" date="1997" name="J. Cell Biol.">
        <title>Conservation of the centromere/kinetochore protein ZW10.</title>
        <authorList>
            <person name="Starr D.A."/>
            <person name="Williams B.C."/>
            <person name="Li Z."/>
            <person name="Etemad-Moghadam B."/>
            <person name="Dawe R.K."/>
            <person name="Goldberg M.L."/>
        </authorList>
    </citation>
    <scope>NUCLEOTIDE SEQUENCE [GENOMIC DNA]</scope>
</reference>
<protein>
    <recommendedName>
        <fullName>Centromere/kinetochore protein zw10</fullName>
    </recommendedName>
    <alternativeName>
        <fullName>Mitotic 15 protein</fullName>
    </alternativeName>
</protein>
<keyword id="KW-0131">Cell cycle</keyword>
<keyword id="KW-0132">Cell division</keyword>
<keyword id="KW-0137">Centromere</keyword>
<keyword id="KW-0158">Chromosome</keyword>
<keyword id="KW-0963">Cytoplasm</keyword>
<keyword id="KW-0995">Kinetochore</keyword>
<keyword id="KW-0469">Meiosis</keyword>
<keyword id="KW-0498">Mitosis</keyword>
<keyword id="KW-0539">Nucleus</keyword>
<proteinExistence type="inferred from homology"/>
<dbReference type="EMBL" id="U54998">
    <property type="protein sequence ID" value="AAB88238.1"/>
    <property type="molecule type" value="Genomic_DNA"/>
</dbReference>
<dbReference type="SMR" id="O44219"/>
<dbReference type="eggNOG" id="KOG2163">
    <property type="taxonomic scope" value="Eukaryota"/>
</dbReference>
<dbReference type="OrthoDB" id="534815at2759"/>
<dbReference type="GO" id="GO:0005737">
    <property type="term" value="C:cytoplasm"/>
    <property type="evidence" value="ECO:0007669"/>
    <property type="project" value="UniProtKB-SubCell"/>
</dbReference>
<dbReference type="GO" id="GO:0005634">
    <property type="term" value="C:nucleus"/>
    <property type="evidence" value="ECO:0007669"/>
    <property type="project" value="UniProtKB-SubCell"/>
</dbReference>
<dbReference type="GO" id="GO:1990423">
    <property type="term" value="C:RZZ complex"/>
    <property type="evidence" value="ECO:0007669"/>
    <property type="project" value="TreeGrafter"/>
</dbReference>
<dbReference type="GO" id="GO:0051301">
    <property type="term" value="P:cell division"/>
    <property type="evidence" value="ECO:0007669"/>
    <property type="project" value="UniProtKB-KW"/>
</dbReference>
<dbReference type="GO" id="GO:0006888">
    <property type="term" value="P:endoplasmic reticulum to Golgi vesicle-mediated transport"/>
    <property type="evidence" value="ECO:0007669"/>
    <property type="project" value="TreeGrafter"/>
</dbReference>
<dbReference type="GO" id="GO:0051321">
    <property type="term" value="P:meiotic cell cycle"/>
    <property type="evidence" value="ECO:0007669"/>
    <property type="project" value="UniProtKB-KW"/>
</dbReference>
<dbReference type="GO" id="GO:0007094">
    <property type="term" value="P:mitotic spindle assembly checkpoint signaling"/>
    <property type="evidence" value="ECO:0007669"/>
    <property type="project" value="TreeGrafter"/>
</dbReference>
<dbReference type="FunFam" id="1.10.357.150:FF:000003">
    <property type="entry name" value="Centromere/kinetochore protein zw10"/>
    <property type="match status" value="1"/>
</dbReference>
<dbReference type="Gene3D" id="1.10.357.150">
    <property type="match status" value="1"/>
</dbReference>
<dbReference type="InterPro" id="IPR046362">
    <property type="entry name" value="Zw10/DSL1_C_sf"/>
</dbReference>
<dbReference type="InterPro" id="IPR048343">
    <property type="entry name" value="ZW10_C"/>
</dbReference>
<dbReference type="InterPro" id="IPR055148">
    <property type="entry name" value="ZW10_C_2"/>
</dbReference>
<dbReference type="InterPro" id="IPR048344">
    <property type="entry name" value="Zw10_middle"/>
</dbReference>
<dbReference type="InterPro" id="IPR009361">
    <property type="entry name" value="Zw10_N"/>
</dbReference>
<dbReference type="PANTHER" id="PTHR12205">
    <property type="entry name" value="CENTROMERE/KINETOCHORE PROTEIN ZW10"/>
    <property type="match status" value="1"/>
</dbReference>
<dbReference type="PANTHER" id="PTHR12205:SF0">
    <property type="entry name" value="CENTROMERE_KINETOCHORE PROTEIN ZW10 HOMOLOG"/>
    <property type="match status" value="1"/>
</dbReference>
<dbReference type="Pfam" id="PF20666">
    <property type="entry name" value="ZW10_C"/>
    <property type="match status" value="1"/>
</dbReference>
<dbReference type="Pfam" id="PF22766">
    <property type="entry name" value="ZW10_C2"/>
    <property type="match status" value="1"/>
</dbReference>
<dbReference type="Pfam" id="PF20665">
    <property type="entry name" value="Zw10_middle"/>
    <property type="match status" value="1"/>
</dbReference>
<dbReference type="Pfam" id="PF06248">
    <property type="entry name" value="Zw10_N"/>
    <property type="match status" value="1"/>
</dbReference>
<sequence length="714" mass="81262">MAETQVLLETYQGQGNNNATNIEATKAAIKKMLVRIERFQTRVRKHIDENYVDFMPNHTSPDIFLEKSSALGDEISDLLATVGNEGLSVLSDASVELAALSRDLREKLFGLRVSEHILKLDDLFQCVEEAKSTKDCLVVLDLMGRLRSLIYGEGTSDDISPDVERIFQSLECYESIKVKYHVQAHLLQQNLQERFDRLVQLSCKSFPTSKCVTLLISKDEALLQDIVIALFQESYNPTKLCAFLLENCIEPLIQKPVSVEYNVNAKDGTHIQLTLSYSIKEPDTSSLLRPNYKDVFEHFRLLLKTLCGINSSLNGTQHVFTVIGDHVKERMLQLLLDECLIRVPETMDEYNSSTLCEDVAEFEHQLVDTFLINPELDTTLTEFTKQFDTYYRNRLSERVLATAREIIQRDLQDMTLVAPSNLSANVASDPLLFPRCMVSKSAQVDFVKLMERVVRQPDKAAEGTPDPLGGVIGLLLDAYINEVPKVHKKLLKSIPQQSALFYNNCMYLTHWVAQHTKDNIDGFPSLVKILQSTGNKHLRVQVSYQESILMDIMSSFEFENPHTLGTAPLRLVRQCLRQLELLKNVWQQVPAENVYNNSFCELLQAFINELVQRVFSLRDISATMASELSDLIDVVLEKASILFHDKNDVVHVRSWLKLQQLKIMMNASLKEFSELWCDGVGPLTANYHADEIKHLIRALFQDTDRRAKAITQIV</sequence>
<organism>
    <name type="scientific">Drosophila grimshawi</name>
    <name type="common">Hawaiian fruit fly</name>
    <name type="synonym">Idiomyia grimshawi</name>
    <dbReference type="NCBI Taxonomy" id="7222"/>
    <lineage>
        <taxon>Eukaryota</taxon>
        <taxon>Metazoa</taxon>
        <taxon>Ecdysozoa</taxon>
        <taxon>Arthropoda</taxon>
        <taxon>Hexapoda</taxon>
        <taxon>Insecta</taxon>
        <taxon>Pterygota</taxon>
        <taxon>Neoptera</taxon>
        <taxon>Endopterygota</taxon>
        <taxon>Diptera</taxon>
        <taxon>Brachycera</taxon>
        <taxon>Muscomorpha</taxon>
        <taxon>Ephydroidea</taxon>
        <taxon>Drosophilidae</taxon>
        <taxon>Drosophila</taxon>
        <taxon>Hawaiian Drosophila</taxon>
    </lineage>
</organism>
<gene>
    <name type="primary">mit(1)15</name>
    <name type="synonym">ZW10</name>
</gene>
<accession>O44219</accession>
<name>ZW10_DROGR</name>
<comment type="function">
    <text evidence="1">Required for accurate chromosome segregation.</text>
</comment>
<comment type="subcellular location">
    <subcellularLocation>
        <location evidence="1">Cytoplasm</location>
    </subcellularLocation>
    <subcellularLocation>
        <location evidence="1">Nucleus</location>
    </subcellularLocation>
    <subcellularLocation>
        <location evidence="1">Chromosome</location>
        <location evidence="1">Centromere</location>
        <location evidence="1">Kinetochore</location>
    </subcellularLocation>
    <text evidence="1">Excluded from the nucleus during interphase but migrates into the nuclear zone during prometaphase. At metaphase, found in a filamentous structure that may be specifically associated with kinetochore microtubules. At anaphase, found at or near kinetochores of separating chromosomes. At the beginning of telophase, becomes excluded again from the nucleus and is dispersed in the cytoplasm (By similarity).</text>
</comment>
<comment type="similarity">
    <text evidence="2">Belongs to the ZW10 family.</text>
</comment>